<accession>Q8W4E1</accession>
<accession>Q0WLV2</accession>
<accession>Q9LN70</accession>
<accession>Q9LPX3</accession>
<gene>
    <name type="primary">RH47</name>
    <name type="synonym">EMB1586</name>
    <name type="synonym">ISE1</name>
    <name type="ordered locus">At1g12770</name>
    <name type="ORF">F13K23.1</name>
    <name type="ORF">T12C24.30</name>
</gene>
<feature type="transit peptide" description="Mitochondrion" evidence="1">
    <location>
        <begin position="1"/>
        <end position="29"/>
    </location>
</feature>
<feature type="chain" id="PRO_0000239187" description="DEAD-box ATP-dependent RNA helicase 47, mitochondrial">
    <location>
        <begin position="30"/>
        <end position="551"/>
    </location>
</feature>
<feature type="domain" description="Helicase ATP-binding" evidence="2">
    <location>
        <begin position="141"/>
        <end position="340"/>
    </location>
</feature>
<feature type="domain" description="Helicase C-terminal" evidence="3">
    <location>
        <begin position="397"/>
        <end position="548"/>
    </location>
</feature>
<feature type="short sequence motif" description="Q motif">
    <location>
        <begin position="110"/>
        <end position="138"/>
    </location>
</feature>
<feature type="short sequence motif" description="DEAD box">
    <location>
        <begin position="274"/>
        <end position="277"/>
    </location>
</feature>
<feature type="binding site" evidence="2">
    <location>
        <begin position="154"/>
        <end position="161"/>
    </location>
    <ligand>
        <name>ATP</name>
        <dbReference type="ChEBI" id="CHEBI:30616"/>
    </ligand>
</feature>
<feature type="mutagenesis site" description="In ise1-1; increased PD-mediated transport, with higher frequency of branched and twinned PD, and impaired mitochondrial metabolism accompanied by a disrupted mitochondrial proton gradient and an increased production of reactive oxygen species." evidence="6">
    <original>G</original>
    <variation>E</variation>
    <location>
        <position position="228"/>
    </location>
</feature>
<feature type="sequence conflict" description="In Ref. 3; AAL32696/AAM48010." evidence="9" ref="3">
    <original>A</original>
    <variation>P</variation>
    <location>
        <position position="238"/>
    </location>
</feature>
<proteinExistence type="evidence at protein level"/>
<keyword id="KW-0067">ATP-binding</keyword>
<keyword id="KW-0347">Helicase</keyword>
<keyword id="KW-0378">Hydrolase</keyword>
<keyword id="KW-0496">Mitochondrion</keyword>
<keyword id="KW-0547">Nucleotide-binding</keyword>
<keyword id="KW-1185">Reference proteome</keyword>
<keyword id="KW-0694">RNA-binding</keyword>
<keyword id="KW-0809">Transit peptide</keyword>
<organism>
    <name type="scientific">Arabidopsis thaliana</name>
    <name type="common">Mouse-ear cress</name>
    <dbReference type="NCBI Taxonomy" id="3702"/>
    <lineage>
        <taxon>Eukaryota</taxon>
        <taxon>Viridiplantae</taxon>
        <taxon>Streptophyta</taxon>
        <taxon>Embryophyta</taxon>
        <taxon>Tracheophyta</taxon>
        <taxon>Spermatophyta</taxon>
        <taxon>Magnoliopsida</taxon>
        <taxon>eudicotyledons</taxon>
        <taxon>Gunneridae</taxon>
        <taxon>Pentapetalae</taxon>
        <taxon>rosids</taxon>
        <taxon>malvids</taxon>
        <taxon>Brassicales</taxon>
        <taxon>Brassicaceae</taxon>
        <taxon>Camelineae</taxon>
        <taxon>Arabidopsis</taxon>
    </lineage>
</organism>
<evidence type="ECO:0000255" key="1"/>
<evidence type="ECO:0000255" key="2">
    <source>
        <dbReference type="PROSITE-ProRule" id="PRU00541"/>
    </source>
</evidence>
<evidence type="ECO:0000255" key="3">
    <source>
        <dbReference type="PROSITE-ProRule" id="PRU00542"/>
    </source>
</evidence>
<evidence type="ECO:0000269" key="4">
    <source>
    </source>
</evidence>
<evidence type="ECO:0000269" key="5">
    <source>
    </source>
</evidence>
<evidence type="ECO:0000269" key="6">
    <source>
    </source>
</evidence>
<evidence type="ECO:0000269" key="7">
    <source>
    </source>
</evidence>
<evidence type="ECO:0000269" key="8">
    <source>
    </source>
</evidence>
<evidence type="ECO:0000305" key="9"/>
<sequence>MAASTSTRFLVLLKDFSAFRKISWTCAATNFHRQSRFLCHVAKEDGSLTLASLDLGNKPRKFGKGKAMKLEGSFVTEMGQGKVRAVKNDKMKVVKEKKPAEIVSPLFSAKSFEELGLPDSLLDSLEREGFSVPTDVQSAAVPAIIKGHDAVIQSYTGSGKTLAYLLPILSEIGPLAEKSRSSHSENDKRTEIQAMIVAPSRELGMQIVREVEKLLGPVHRRMVQQLVGGANRMRQEEALKKNKPAIVVGTPGRIAEISKGGKLHTHGCRFLVLDEVDELLSFNFREDIHRILEHVGKRSGAGPKGEVDERANRQTILVSATVPFSVIRAAKSWSHEPVLVQANKVTPLDTVQPSAPVMSLTPTTSEADGQIQTTIQSLPPALKHYYCISKHQHKVDTLRRCVHALDAQSVIAFMNHSRQLKDVVYKLEARGMNSAEMHGDLGKLGRSTVLKKFKNGEIKVLVTNELSARGLDVAECDLVVNLELPTDAVHYAHRAGRTGRLGRKGTVVTVCEESQVFIVKKMEKQLGLPFLYCEFVDGELVVTEEDKAIIR</sequence>
<reference key="1">
    <citation type="journal article" date="2000" name="Nature">
        <title>Sequence and analysis of chromosome 1 of the plant Arabidopsis thaliana.</title>
        <authorList>
            <person name="Theologis A."/>
            <person name="Ecker J.R."/>
            <person name="Palm C.J."/>
            <person name="Federspiel N.A."/>
            <person name="Kaul S."/>
            <person name="White O."/>
            <person name="Alonso J."/>
            <person name="Altafi H."/>
            <person name="Araujo R."/>
            <person name="Bowman C.L."/>
            <person name="Brooks S.Y."/>
            <person name="Buehler E."/>
            <person name="Chan A."/>
            <person name="Chao Q."/>
            <person name="Chen H."/>
            <person name="Cheuk R.F."/>
            <person name="Chin C.W."/>
            <person name="Chung M.K."/>
            <person name="Conn L."/>
            <person name="Conway A.B."/>
            <person name="Conway A.R."/>
            <person name="Creasy T.H."/>
            <person name="Dewar K."/>
            <person name="Dunn P."/>
            <person name="Etgu P."/>
            <person name="Feldblyum T.V."/>
            <person name="Feng J.-D."/>
            <person name="Fong B."/>
            <person name="Fujii C.Y."/>
            <person name="Gill J.E."/>
            <person name="Goldsmith A.D."/>
            <person name="Haas B."/>
            <person name="Hansen N.F."/>
            <person name="Hughes B."/>
            <person name="Huizar L."/>
            <person name="Hunter J.L."/>
            <person name="Jenkins J."/>
            <person name="Johnson-Hopson C."/>
            <person name="Khan S."/>
            <person name="Khaykin E."/>
            <person name="Kim C.J."/>
            <person name="Koo H.L."/>
            <person name="Kremenetskaia I."/>
            <person name="Kurtz D.B."/>
            <person name="Kwan A."/>
            <person name="Lam B."/>
            <person name="Langin-Hooper S."/>
            <person name="Lee A."/>
            <person name="Lee J.M."/>
            <person name="Lenz C.A."/>
            <person name="Li J.H."/>
            <person name="Li Y.-P."/>
            <person name="Lin X."/>
            <person name="Liu S.X."/>
            <person name="Liu Z.A."/>
            <person name="Luros J.S."/>
            <person name="Maiti R."/>
            <person name="Marziali A."/>
            <person name="Militscher J."/>
            <person name="Miranda M."/>
            <person name="Nguyen M."/>
            <person name="Nierman W.C."/>
            <person name="Osborne B.I."/>
            <person name="Pai G."/>
            <person name="Peterson J."/>
            <person name="Pham P.K."/>
            <person name="Rizzo M."/>
            <person name="Rooney T."/>
            <person name="Rowley D."/>
            <person name="Sakano H."/>
            <person name="Salzberg S.L."/>
            <person name="Schwartz J.R."/>
            <person name="Shinn P."/>
            <person name="Southwick A.M."/>
            <person name="Sun H."/>
            <person name="Tallon L.J."/>
            <person name="Tambunga G."/>
            <person name="Toriumi M.J."/>
            <person name="Town C.D."/>
            <person name="Utterback T."/>
            <person name="Van Aken S."/>
            <person name="Vaysberg M."/>
            <person name="Vysotskaia V.S."/>
            <person name="Walker M."/>
            <person name="Wu D."/>
            <person name="Yu G."/>
            <person name="Fraser C.M."/>
            <person name="Venter J.C."/>
            <person name="Davis R.W."/>
        </authorList>
    </citation>
    <scope>NUCLEOTIDE SEQUENCE [LARGE SCALE GENOMIC DNA]</scope>
    <source>
        <strain>cv. Columbia</strain>
    </source>
</reference>
<reference key="2">
    <citation type="journal article" date="2017" name="Plant J.">
        <title>Araport11: a complete reannotation of the Arabidopsis thaliana reference genome.</title>
        <authorList>
            <person name="Cheng C.Y."/>
            <person name="Krishnakumar V."/>
            <person name="Chan A.P."/>
            <person name="Thibaud-Nissen F."/>
            <person name="Schobel S."/>
            <person name="Town C.D."/>
        </authorList>
    </citation>
    <scope>GENOME REANNOTATION</scope>
    <source>
        <strain>cv. Columbia</strain>
    </source>
</reference>
<reference key="3">
    <citation type="journal article" date="2003" name="Science">
        <title>Empirical analysis of transcriptional activity in the Arabidopsis genome.</title>
        <authorList>
            <person name="Yamada K."/>
            <person name="Lim J."/>
            <person name="Dale J.M."/>
            <person name="Chen H."/>
            <person name="Shinn P."/>
            <person name="Palm C.J."/>
            <person name="Southwick A.M."/>
            <person name="Wu H.C."/>
            <person name="Kim C.J."/>
            <person name="Nguyen M."/>
            <person name="Pham P.K."/>
            <person name="Cheuk R.F."/>
            <person name="Karlin-Newmann G."/>
            <person name="Liu S.X."/>
            <person name="Lam B."/>
            <person name="Sakano H."/>
            <person name="Wu T."/>
            <person name="Yu G."/>
            <person name="Miranda M."/>
            <person name="Quach H.L."/>
            <person name="Tripp M."/>
            <person name="Chang C.H."/>
            <person name="Lee J.M."/>
            <person name="Toriumi M.J."/>
            <person name="Chan M.M."/>
            <person name="Tang C.C."/>
            <person name="Onodera C.S."/>
            <person name="Deng J.M."/>
            <person name="Akiyama K."/>
            <person name="Ansari Y."/>
            <person name="Arakawa T."/>
            <person name="Banh J."/>
            <person name="Banno F."/>
            <person name="Bowser L."/>
            <person name="Brooks S.Y."/>
            <person name="Carninci P."/>
            <person name="Chao Q."/>
            <person name="Choy N."/>
            <person name="Enju A."/>
            <person name="Goldsmith A.D."/>
            <person name="Gurjal M."/>
            <person name="Hansen N.F."/>
            <person name="Hayashizaki Y."/>
            <person name="Johnson-Hopson C."/>
            <person name="Hsuan V.W."/>
            <person name="Iida K."/>
            <person name="Karnes M."/>
            <person name="Khan S."/>
            <person name="Koesema E."/>
            <person name="Ishida J."/>
            <person name="Jiang P.X."/>
            <person name="Jones T."/>
            <person name="Kawai J."/>
            <person name="Kamiya A."/>
            <person name="Meyers C."/>
            <person name="Nakajima M."/>
            <person name="Narusaka M."/>
            <person name="Seki M."/>
            <person name="Sakurai T."/>
            <person name="Satou M."/>
            <person name="Tamse R."/>
            <person name="Vaysberg M."/>
            <person name="Wallender E.K."/>
            <person name="Wong C."/>
            <person name="Yamamura Y."/>
            <person name="Yuan S."/>
            <person name="Shinozaki K."/>
            <person name="Davis R.W."/>
            <person name="Theologis A."/>
            <person name="Ecker J.R."/>
        </authorList>
    </citation>
    <scope>NUCLEOTIDE SEQUENCE [LARGE SCALE MRNA]</scope>
    <source>
        <strain>cv. Columbia</strain>
    </source>
</reference>
<reference key="4">
    <citation type="submission" date="2006-07" db="EMBL/GenBank/DDBJ databases">
        <title>Large-scale analysis of RIKEN Arabidopsis full-length (RAFL) cDNAs.</title>
        <authorList>
            <person name="Totoki Y."/>
            <person name="Seki M."/>
            <person name="Ishida J."/>
            <person name="Nakajima M."/>
            <person name="Enju A."/>
            <person name="Kamiya A."/>
            <person name="Narusaka M."/>
            <person name="Shin-i T."/>
            <person name="Nakagawa M."/>
            <person name="Sakamoto N."/>
            <person name="Oishi K."/>
            <person name="Kohara Y."/>
            <person name="Kobayashi M."/>
            <person name="Toyoda A."/>
            <person name="Sakaki Y."/>
            <person name="Sakurai T."/>
            <person name="Iida K."/>
            <person name="Akiyama K."/>
            <person name="Satou M."/>
            <person name="Toyoda T."/>
            <person name="Konagaya A."/>
            <person name="Carninci P."/>
            <person name="Kawai J."/>
            <person name="Hayashizaki Y."/>
            <person name="Shinozaki K."/>
        </authorList>
    </citation>
    <scope>NUCLEOTIDE SEQUENCE [LARGE SCALE MRNA]</scope>
    <source>
        <strain>cv. Columbia</strain>
    </source>
</reference>
<reference key="5">
    <citation type="journal article" date="2001" name="Genetics">
        <title>Insertional mutagenesis of genes required for seed development in Arabidopsis thaliana.</title>
        <authorList>
            <person name="McElver J."/>
            <person name="Tzafrir I."/>
            <person name="Aux G."/>
            <person name="Rogers R."/>
            <person name="Ashby C."/>
            <person name="Smith K."/>
            <person name="Thomas C."/>
            <person name="Schetter A."/>
            <person name="Zhou Q."/>
            <person name="Cushman M.A."/>
            <person name="Tossberg J."/>
            <person name="Nickle T."/>
            <person name="Levin J.Z."/>
            <person name="Law M."/>
            <person name="Meinke D."/>
            <person name="Patton D."/>
        </authorList>
    </citation>
    <scope>FUNCTION</scope>
    <scope>DISRUPTION PHENOTYPE</scope>
</reference>
<reference key="6">
    <citation type="journal article" date="2002" name="Development">
        <title>Identification of a developmental transition in plasmodesmatal function during embryogenesis in Arabidopsis thaliana.</title>
        <authorList>
            <person name="Kim I."/>
            <person name="Hempel F.D."/>
            <person name="Sha K."/>
            <person name="Pfluger J."/>
            <person name="Zambryski P.C."/>
        </authorList>
    </citation>
    <scope>FUNCTION</scope>
    <scope>DISRUPTION PHENOTYPE</scope>
</reference>
<reference key="7">
    <citation type="journal article" date="2004" name="Plant Biotechnol. J.">
        <title>DEAD-box RNA helicases in Arabidopsis thaliana: establishing a link between quantitative expression, gene structure and evolution of a family of genes.</title>
        <authorList>
            <person name="Mingam A."/>
            <person name="Toffano-Nioche C."/>
            <person name="Brunaud V."/>
            <person name="Boudet N."/>
            <person name="Kreis M."/>
            <person name="Lecharny A."/>
        </authorList>
    </citation>
    <scope>GENE FAMILY</scope>
    <scope>NOMENCLATURE</scope>
</reference>
<reference key="8">
    <citation type="journal article" date="2009" name="Proc. Natl. Acad. Sci. U.S.A.">
        <title>Loss of the plant DEAD-box protein ISE1 leads to defective mitochondria and increased cell-to-cell transport via plasmodesmata.</title>
        <authorList>
            <person name="Stonebloom S."/>
            <person name="Burch-Smith T."/>
            <person name="Kim I."/>
            <person name="Meinke D."/>
            <person name="Mindrinos M."/>
            <person name="Zambryski P."/>
        </authorList>
    </citation>
    <scope>FUNCTION</scope>
    <scope>DISRUPTION PHENOTYPE</scope>
    <scope>MUTAGENESIS OF GLY-228</scope>
    <scope>SUBCELLULAR LOCATION</scope>
    <scope>TISSUE SPECIFICITY</scope>
</reference>
<reference key="9">
    <citation type="journal article" date="2010" name="Curr. Biol.">
        <title>Plasmodesmata formation: poking holes in walls with ise.</title>
        <authorList>
            <person name="Lee D.K."/>
            <person name="Sieburth L.E."/>
        </authorList>
    </citation>
    <scope>REVIEW</scope>
</reference>
<reference key="10">
    <citation type="journal article" date="2010" name="Curr. Biol.">
        <title>Loss of INCREASED SIZE EXCLUSION LIMIT (ISE)1 or ISE2 increases the formation of secondary plasmodesmata.</title>
        <authorList>
            <person name="Burch-Smith T.-M."/>
            <person name="Zambryski P.C."/>
        </authorList>
    </citation>
    <scope>FUNCTION</scope>
    <scope>DISRUPTION PHENOTYPE</scope>
</reference>
<reference key="11">
    <citation type="journal article" date="2011" name="Proc. Natl. Acad. Sci. U.S.A.">
        <title>Organelle-nucleus cross-talk regulates plant intercellular communication via plasmodesmata.</title>
        <authorList>
            <person name="Burch-Smith T.M."/>
            <person name="Brunkard J.O."/>
            <person name="Choi Y.G."/>
            <person name="Zambryski P.C."/>
        </authorList>
    </citation>
    <scope>DISRUPTION PHENOTYPE</scope>
</reference>
<reference key="12">
    <citation type="journal article" date="2013" name="PLoS ONE">
        <title>Genome-wide comparative in silico analysis of the RNA helicase gene family in Zea mays and Glycine max: a comparison with Arabidopsis and Oryza sativa.</title>
        <authorList>
            <person name="Xu R."/>
            <person name="Zhang S."/>
            <person name="Huang J."/>
            <person name="Zheng C."/>
        </authorList>
    </citation>
    <scope>GENE FAMILY</scope>
</reference>
<name>RH47_ARATH</name>
<dbReference type="EC" id="3.6.4.13"/>
<dbReference type="EMBL" id="AC012187">
    <property type="protein sequence ID" value="AAF78481.1"/>
    <property type="molecule type" value="Genomic_DNA"/>
</dbReference>
<dbReference type="EMBL" id="AC025417">
    <property type="protein sequence ID" value="AAF88089.2"/>
    <property type="molecule type" value="Genomic_DNA"/>
</dbReference>
<dbReference type="EMBL" id="CP002684">
    <property type="protein sequence ID" value="AEE28926.1"/>
    <property type="molecule type" value="Genomic_DNA"/>
</dbReference>
<dbReference type="EMBL" id="CP002684">
    <property type="protein sequence ID" value="ANM60164.1"/>
    <property type="molecule type" value="Genomic_DNA"/>
</dbReference>
<dbReference type="EMBL" id="AY062618">
    <property type="protein sequence ID" value="AAL32696.1"/>
    <property type="molecule type" value="mRNA"/>
</dbReference>
<dbReference type="EMBL" id="AY114691">
    <property type="protein sequence ID" value="AAM48010.1"/>
    <property type="molecule type" value="mRNA"/>
</dbReference>
<dbReference type="EMBL" id="AK175587">
    <property type="protein sequence ID" value="BAD43350.1"/>
    <property type="molecule type" value="mRNA"/>
</dbReference>
<dbReference type="EMBL" id="AK175711">
    <property type="protein sequence ID" value="BAD43474.1"/>
    <property type="molecule type" value="mRNA"/>
</dbReference>
<dbReference type="EMBL" id="AK175751">
    <property type="protein sequence ID" value="BAD43514.1"/>
    <property type="molecule type" value="mRNA"/>
</dbReference>
<dbReference type="EMBL" id="AK175793">
    <property type="protein sequence ID" value="BAD43556.1"/>
    <property type="molecule type" value="mRNA"/>
</dbReference>
<dbReference type="EMBL" id="AK176044">
    <property type="protein sequence ID" value="BAD43807.1"/>
    <property type="molecule type" value="mRNA"/>
</dbReference>
<dbReference type="EMBL" id="AK176194">
    <property type="protein sequence ID" value="BAD43957.1"/>
    <property type="molecule type" value="mRNA"/>
</dbReference>
<dbReference type="EMBL" id="AK226229">
    <property type="protein sequence ID" value="BAE98393.1"/>
    <property type="molecule type" value="mRNA"/>
</dbReference>
<dbReference type="EMBL" id="AK229878">
    <property type="protein sequence ID" value="BAF01707.1"/>
    <property type="molecule type" value="mRNA"/>
</dbReference>
<dbReference type="EMBL" id="AK230085">
    <property type="protein sequence ID" value="BAF01905.1"/>
    <property type="molecule type" value="mRNA"/>
</dbReference>
<dbReference type="PIR" id="H86260">
    <property type="entry name" value="H86260"/>
</dbReference>
<dbReference type="RefSeq" id="NP_001322468.1">
    <property type="nucleotide sequence ID" value="NM_001332052.1"/>
</dbReference>
<dbReference type="RefSeq" id="NP_172737.2">
    <property type="nucleotide sequence ID" value="NM_101147.3"/>
</dbReference>
<dbReference type="SMR" id="Q8W4E1"/>
<dbReference type="FunCoup" id="Q8W4E1">
    <property type="interactions" value="1365"/>
</dbReference>
<dbReference type="STRING" id="3702.Q8W4E1"/>
<dbReference type="PaxDb" id="3702-AT1G12770.1"/>
<dbReference type="ProteomicsDB" id="236247"/>
<dbReference type="EnsemblPlants" id="AT1G12770.1">
    <property type="protein sequence ID" value="AT1G12770.1"/>
    <property type="gene ID" value="AT1G12770"/>
</dbReference>
<dbReference type="EnsemblPlants" id="AT1G12770.2">
    <property type="protein sequence ID" value="AT1G12770.2"/>
    <property type="gene ID" value="AT1G12770"/>
</dbReference>
<dbReference type="GeneID" id="837833"/>
<dbReference type="Gramene" id="AT1G12770.1">
    <property type="protein sequence ID" value="AT1G12770.1"/>
    <property type="gene ID" value="AT1G12770"/>
</dbReference>
<dbReference type="Gramene" id="AT1G12770.2">
    <property type="protein sequence ID" value="AT1G12770.2"/>
    <property type="gene ID" value="AT1G12770"/>
</dbReference>
<dbReference type="KEGG" id="ath:AT1G12770"/>
<dbReference type="Araport" id="AT1G12770"/>
<dbReference type="TAIR" id="AT1G12770">
    <property type="gene designation" value="EMB1586"/>
</dbReference>
<dbReference type="eggNOG" id="KOG0327">
    <property type="taxonomic scope" value="Eukaryota"/>
</dbReference>
<dbReference type="HOGENOM" id="CLU_003041_1_3_1"/>
<dbReference type="InParanoid" id="Q8W4E1"/>
<dbReference type="OMA" id="KHYYCIS"/>
<dbReference type="PhylomeDB" id="Q8W4E1"/>
<dbReference type="CD-CODE" id="4299E36E">
    <property type="entry name" value="Nucleolus"/>
</dbReference>
<dbReference type="PRO" id="PR:Q8W4E1"/>
<dbReference type="Proteomes" id="UP000006548">
    <property type="component" value="Chromosome 1"/>
</dbReference>
<dbReference type="ExpressionAtlas" id="Q8W4E1">
    <property type="expression patterns" value="baseline and differential"/>
</dbReference>
<dbReference type="GO" id="GO:0005739">
    <property type="term" value="C:mitochondrion"/>
    <property type="evidence" value="ECO:0000314"/>
    <property type="project" value="TAIR"/>
</dbReference>
<dbReference type="GO" id="GO:0005524">
    <property type="term" value="F:ATP binding"/>
    <property type="evidence" value="ECO:0007669"/>
    <property type="project" value="UniProtKB-KW"/>
</dbReference>
<dbReference type="GO" id="GO:0016887">
    <property type="term" value="F:ATP hydrolysis activity"/>
    <property type="evidence" value="ECO:0007669"/>
    <property type="project" value="RHEA"/>
</dbReference>
<dbReference type="GO" id="GO:0003729">
    <property type="term" value="F:mRNA binding"/>
    <property type="evidence" value="ECO:0000314"/>
    <property type="project" value="TAIR"/>
</dbReference>
<dbReference type="GO" id="GO:0003724">
    <property type="term" value="F:RNA helicase activity"/>
    <property type="evidence" value="ECO:0007669"/>
    <property type="project" value="UniProtKB-EC"/>
</dbReference>
<dbReference type="GO" id="GO:0009663">
    <property type="term" value="P:plasmodesma organization"/>
    <property type="evidence" value="ECO:0000315"/>
    <property type="project" value="TAIR"/>
</dbReference>
<dbReference type="GO" id="GO:0010497">
    <property type="term" value="P:plasmodesmata-mediated intercellular transport"/>
    <property type="evidence" value="ECO:0000315"/>
    <property type="project" value="TAIR"/>
</dbReference>
<dbReference type="CDD" id="cd00268">
    <property type="entry name" value="DEADc"/>
    <property type="match status" value="1"/>
</dbReference>
<dbReference type="CDD" id="cd18787">
    <property type="entry name" value="SF2_C_DEAD"/>
    <property type="match status" value="1"/>
</dbReference>
<dbReference type="FunFam" id="3.40.50.300:FF:003658">
    <property type="entry name" value="BnaA08g24620D protein"/>
    <property type="match status" value="1"/>
</dbReference>
<dbReference type="Gene3D" id="3.40.50.300">
    <property type="entry name" value="P-loop containing nucleotide triphosphate hydrolases"/>
    <property type="match status" value="2"/>
</dbReference>
<dbReference type="InterPro" id="IPR011545">
    <property type="entry name" value="DEAD/DEAH_box_helicase_dom"/>
</dbReference>
<dbReference type="InterPro" id="IPR050547">
    <property type="entry name" value="DEAD_box_RNA_helicases"/>
</dbReference>
<dbReference type="InterPro" id="IPR014001">
    <property type="entry name" value="Helicase_ATP-bd"/>
</dbReference>
<dbReference type="InterPro" id="IPR001650">
    <property type="entry name" value="Helicase_C-like"/>
</dbReference>
<dbReference type="InterPro" id="IPR027417">
    <property type="entry name" value="P-loop_NTPase"/>
</dbReference>
<dbReference type="InterPro" id="IPR014014">
    <property type="entry name" value="RNA_helicase_DEAD_Q_motif"/>
</dbReference>
<dbReference type="PANTHER" id="PTHR47963">
    <property type="entry name" value="DEAD-BOX ATP-DEPENDENT RNA HELICASE 47, MITOCHONDRIAL"/>
    <property type="match status" value="1"/>
</dbReference>
<dbReference type="PANTHER" id="PTHR47963:SF3">
    <property type="entry name" value="DEAD-BOX ATP-DEPENDENT RNA HELICASE 47, MITOCHONDRIAL"/>
    <property type="match status" value="1"/>
</dbReference>
<dbReference type="Pfam" id="PF00270">
    <property type="entry name" value="DEAD"/>
    <property type="match status" value="1"/>
</dbReference>
<dbReference type="Pfam" id="PF00271">
    <property type="entry name" value="Helicase_C"/>
    <property type="match status" value="1"/>
</dbReference>
<dbReference type="SMART" id="SM00487">
    <property type="entry name" value="DEXDc"/>
    <property type="match status" value="1"/>
</dbReference>
<dbReference type="SMART" id="SM00490">
    <property type="entry name" value="HELICc"/>
    <property type="match status" value="1"/>
</dbReference>
<dbReference type="SUPFAM" id="SSF52540">
    <property type="entry name" value="P-loop containing nucleoside triphosphate hydrolases"/>
    <property type="match status" value="1"/>
</dbReference>
<dbReference type="PROSITE" id="PS51192">
    <property type="entry name" value="HELICASE_ATP_BIND_1"/>
    <property type="match status" value="1"/>
</dbReference>
<dbReference type="PROSITE" id="PS51194">
    <property type="entry name" value="HELICASE_CTER"/>
    <property type="match status" value="1"/>
</dbReference>
<dbReference type="PROSITE" id="PS51195">
    <property type="entry name" value="Q_MOTIF"/>
    <property type="match status" value="1"/>
</dbReference>
<protein>
    <recommendedName>
        <fullName>DEAD-box ATP-dependent RNA helicase 47, mitochondrial</fullName>
        <ecNumber>3.6.4.13</ecNumber>
    </recommendedName>
    <alternativeName>
        <fullName>Protein EMBRYO DEFECTIVE 1586</fullName>
    </alternativeName>
    <alternativeName>
        <fullName>Protein INCREASED SIZE EXCLUSION LIMIT 1</fullName>
    </alternativeName>
</protein>
<comment type="function">
    <text evidence="4 5 6 7">Essential protein required during embryogenesis. Required for mitochondrial metabolism. Necessary for normal plasmodesmata (PD) development and aperture regulation.</text>
</comment>
<comment type="catalytic activity">
    <reaction>
        <text>ATP + H2O = ADP + phosphate + H(+)</text>
        <dbReference type="Rhea" id="RHEA:13065"/>
        <dbReference type="ChEBI" id="CHEBI:15377"/>
        <dbReference type="ChEBI" id="CHEBI:15378"/>
        <dbReference type="ChEBI" id="CHEBI:30616"/>
        <dbReference type="ChEBI" id="CHEBI:43474"/>
        <dbReference type="ChEBI" id="CHEBI:456216"/>
        <dbReference type="EC" id="3.6.4.13"/>
    </reaction>
</comment>
<comment type="subcellular location">
    <subcellularLocation>
        <location evidence="6">Mitochondrion</location>
    </subcellularLocation>
</comment>
<comment type="tissue specificity">
    <text evidence="6">Mostly expressed in leaves and flowers, and, to a lower extent, in roots, seedlings and siliques, especially in meristematic regions.</text>
</comment>
<comment type="domain">
    <text>The Q motif is unique to and characteristic of the DEAD box family of RNA helicases and controls ATP binding and hydrolysis.</text>
</comment>
<comment type="disruption phenotype">
    <text evidence="4 5 6 7 8">Embryogenesis mostly arrested at globular stage and cotyledon stage. Altered size exclusion limit of PD; abnormally maintained dilated PD at the torpedo stage and increased formation of secondary branched PD. Chlorosis (PubMed:11779812, PubMed:11874921, PubMed:19805190, PubMed:20434343). Altered plastid development (PubMed:22106293).</text>
</comment>
<comment type="similarity">
    <text evidence="9">Belongs to the DEAD box helicase family.</text>
</comment>